<keyword id="KW-0963">Cytoplasm</keyword>
<keyword id="KW-0819">tRNA processing</keyword>
<organism>
    <name type="scientific">Edwardsiella ictaluri (strain 93-146)</name>
    <dbReference type="NCBI Taxonomy" id="634503"/>
    <lineage>
        <taxon>Bacteria</taxon>
        <taxon>Pseudomonadati</taxon>
        <taxon>Pseudomonadota</taxon>
        <taxon>Gammaproteobacteria</taxon>
        <taxon>Enterobacterales</taxon>
        <taxon>Hafniaceae</taxon>
        <taxon>Edwardsiella</taxon>
    </lineage>
</organism>
<reference key="1">
    <citation type="submission" date="2009-03" db="EMBL/GenBank/DDBJ databases">
        <title>Complete genome sequence of Edwardsiella ictaluri 93-146.</title>
        <authorList>
            <person name="Williams M.L."/>
            <person name="Gillaspy A.F."/>
            <person name="Dyer D.W."/>
            <person name="Thune R.L."/>
            <person name="Waldbieser G.C."/>
            <person name="Schuster S.C."/>
            <person name="Gipson J."/>
            <person name="Zaitshik J."/>
            <person name="Landry C."/>
            <person name="Lawrence M.L."/>
        </authorList>
    </citation>
    <scope>NUCLEOTIDE SEQUENCE [LARGE SCALE GENOMIC DNA]</scope>
    <source>
        <strain>93-146</strain>
    </source>
</reference>
<name>TUSA_EDWI9</name>
<proteinExistence type="inferred from homology"/>
<evidence type="ECO:0000255" key="1">
    <source>
        <dbReference type="HAMAP-Rule" id="MF_00413"/>
    </source>
</evidence>
<sequence length="82" mass="9262">MTDLFANPDKTLDALGLRCPEPVMMVRKTVRHMVAGETLLIIADDPATTRDIPGFCRFMEHTLLAQEIEQTPYRYLLRKGGA</sequence>
<accession>C5B9A2</accession>
<dbReference type="EMBL" id="CP001600">
    <property type="protein sequence ID" value="ACR67282.1"/>
    <property type="molecule type" value="Genomic_DNA"/>
</dbReference>
<dbReference type="RefSeq" id="WP_015869506.1">
    <property type="nucleotide sequence ID" value="NZ_CP169062.1"/>
</dbReference>
<dbReference type="SMR" id="C5B9A2"/>
<dbReference type="STRING" id="67780.B6E78_11280"/>
<dbReference type="GeneID" id="69537138"/>
<dbReference type="KEGG" id="eic:NT01EI_0022"/>
<dbReference type="PATRIC" id="fig|634503.3.peg.18"/>
<dbReference type="HOGENOM" id="CLU_165255_5_0_6"/>
<dbReference type="OrthoDB" id="9797352at2"/>
<dbReference type="Proteomes" id="UP000001485">
    <property type="component" value="Chromosome"/>
</dbReference>
<dbReference type="GO" id="GO:0005737">
    <property type="term" value="C:cytoplasm"/>
    <property type="evidence" value="ECO:0007669"/>
    <property type="project" value="UniProtKB-SubCell"/>
</dbReference>
<dbReference type="GO" id="GO:0097163">
    <property type="term" value="F:sulfur carrier activity"/>
    <property type="evidence" value="ECO:0007669"/>
    <property type="project" value="UniProtKB-UniRule"/>
</dbReference>
<dbReference type="GO" id="GO:0002143">
    <property type="term" value="P:tRNA wobble position uridine thiolation"/>
    <property type="evidence" value="ECO:0007669"/>
    <property type="project" value="InterPro"/>
</dbReference>
<dbReference type="CDD" id="cd03423">
    <property type="entry name" value="SirA"/>
    <property type="match status" value="1"/>
</dbReference>
<dbReference type="Gene3D" id="3.30.110.40">
    <property type="entry name" value="TusA-like domain"/>
    <property type="match status" value="1"/>
</dbReference>
<dbReference type="HAMAP" id="MF_00413">
    <property type="entry name" value="Thiourid_synth_A"/>
    <property type="match status" value="1"/>
</dbReference>
<dbReference type="InterPro" id="IPR022931">
    <property type="entry name" value="Sulphur_carrier_TusA"/>
</dbReference>
<dbReference type="InterPro" id="IPR001455">
    <property type="entry name" value="TusA-like"/>
</dbReference>
<dbReference type="InterPro" id="IPR036868">
    <property type="entry name" value="TusA-like_sf"/>
</dbReference>
<dbReference type="NCBIfam" id="NF001423">
    <property type="entry name" value="PRK00299.1"/>
    <property type="match status" value="1"/>
</dbReference>
<dbReference type="PANTHER" id="PTHR33279:SF2">
    <property type="entry name" value="SULFUR CARRIER PROTEIN TUSA"/>
    <property type="match status" value="1"/>
</dbReference>
<dbReference type="PANTHER" id="PTHR33279">
    <property type="entry name" value="SULFUR CARRIER PROTEIN YEDF-RELATED"/>
    <property type="match status" value="1"/>
</dbReference>
<dbReference type="Pfam" id="PF01206">
    <property type="entry name" value="TusA"/>
    <property type="match status" value="1"/>
</dbReference>
<dbReference type="SUPFAM" id="SSF64307">
    <property type="entry name" value="SirA-like"/>
    <property type="match status" value="1"/>
</dbReference>
<dbReference type="PROSITE" id="PS01148">
    <property type="entry name" value="UPF0033"/>
    <property type="match status" value="1"/>
</dbReference>
<feature type="chain" id="PRO_1000206006" description="Sulfur carrier protein TusA">
    <location>
        <begin position="1"/>
        <end position="82"/>
    </location>
</feature>
<feature type="active site" description="Cysteine persulfide intermediate" evidence="1">
    <location>
        <position position="19"/>
    </location>
</feature>
<comment type="function">
    <text evidence="1">Sulfur carrier protein involved in sulfur trafficking in the cell. Part of a sulfur-relay system required for 2-thiolation during synthesis of 2-thiouridine of the modified wobble base 5-methylaminomethyl-2-thiouridine (mnm(5)s(2)U) in tRNA. Interacts with IscS and stimulates its cysteine desulfurase activity. Accepts an activated sulfur from IscS, which is then transferred to TusD, and thus determines the direction of sulfur flow from IscS to 2-thiouridine formation. Also appears to be involved in sulfur transfer for the biosynthesis of molybdopterin.</text>
</comment>
<comment type="pathway">
    <text evidence="1">tRNA modification.</text>
</comment>
<comment type="subunit">
    <text evidence="1">Interacts with IscS.</text>
</comment>
<comment type="subcellular location">
    <subcellularLocation>
        <location evidence="1">Cytoplasm</location>
    </subcellularLocation>
</comment>
<comment type="similarity">
    <text evidence="1">Belongs to the sulfur carrier protein TusA family.</text>
</comment>
<protein>
    <recommendedName>
        <fullName evidence="1">Sulfur carrier protein TusA</fullName>
    </recommendedName>
    <alternativeName>
        <fullName evidence="1">Sulfur mediator TusA</fullName>
    </alternativeName>
    <alternativeName>
        <fullName evidence="1">Sulfur transfer protein TusA</fullName>
    </alternativeName>
    <alternativeName>
        <fullName evidence="1">tRNA 2-thiouridine synthesizing protein A</fullName>
    </alternativeName>
</protein>
<gene>
    <name evidence="1" type="primary">tusA</name>
    <name type="ordered locus">NT01EI_0022</name>
</gene>